<protein>
    <recommendedName>
        <fullName evidence="1">Peptidyl-tRNA hydrolase</fullName>
        <shortName evidence="1">Pth</shortName>
        <ecNumber evidence="1">3.1.1.29</ecNumber>
    </recommendedName>
</protein>
<evidence type="ECO:0000255" key="1">
    <source>
        <dbReference type="HAMAP-Rule" id="MF_00083"/>
    </source>
</evidence>
<organism>
    <name type="scientific">Xanthomonas campestris pv. campestris (strain ATCC 33913 / DSM 3586 / NCPPB 528 / LMG 568 / P 25)</name>
    <dbReference type="NCBI Taxonomy" id="190485"/>
    <lineage>
        <taxon>Bacteria</taxon>
        <taxon>Pseudomonadati</taxon>
        <taxon>Pseudomonadota</taxon>
        <taxon>Gammaproteobacteria</taxon>
        <taxon>Lysobacterales</taxon>
        <taxon>Lysobacteraceae</taxon>
        <taxon>Xanthomonas</taxon>
    </lineage>
</organism>
<accession>Q8PC61</accession>
<comment type="function">
    <text evidence="1">Hydrolyzes ribosome-free peptidyl-tRNAs (with 1 or more amino acids incorporated), which drop off the ribosome during protein synthesis, or as a result of ribosome stalling.</text>
</comment>
<comment type="function">
    <text evidence="1">Catalyzes the release of premature peptidyl moieties from peptidyl-tRNA molecules trapped in stalled 50S ribosomal subunits, and thus maintains levels of free tRNAs and 50S ribosomes.</text>
</comment>
<comment type="catalytic activity">
    <reaction evidence="1">
        <text>an N-acyl-L-alpha-aminoacyl-tRNA + H2O = an N-acyl-L-amino acid + a tRNA + H(+)</text>
        <dbReference type="Rhea" id="RHEA:54448"/>
        <dbReference type="Rhea" id="RHEA-COMP:10123"/>
        <dbReference type="Rhea" id="RHEA-COMP:13883"/>
        <dbReference type="ChEBI" id="CHEBI:15377"/>
        <dbReference type="ChEBI" id="CHEBI:15378"/>
        <dbReference type="ChEBI" id="CHEBI:59874"/>
        <dbReference type="ChEBI" id="CHEBI:78442"/>
        <dbReference type="ChEBI" id="CHEBI:138191"/>
        <dbReference type="EC" id="3.1.1.29"/>
    </reaction>
</comment>
<comment type="subunit">
    <text evidence="1">Monomer.</text>
</comment>
<comment type="subcellular location">
    <subcellularLocation>
        <location evidence="1">Cytoplasm</location>
    </subcellularLocation>
</comment>
<comment type="similarity">
    <text evidence="1">Belongs to the PTH family.</text>
</comment>
<dbReference type="EC" id="3.1.1.29" evidence="1"/>
<dbReference type="EMBL" id="AE008922">
    <property type="protein sequence ID" value="AAM40189.1"/>
    <property type="molecule type" value="Genomic_DNA"/>
</dbReference>
<dbReference type="RefSeq" id="NP_636265.1">
    <property type="nucleotide sequence ID" value="NC_003902.1"/>
</dbReference>
<dbReference type="RefSeq" id="WP_011036110.1">
    <property type="nucleotide sequence ID" value="NC_003902.1"/>
</dbReference>
<dbReference type="SMR" id="Q8PC61"/>
<dbReference type="STRING" id="190485.XCC0875"/>
<dbReference type="EnsemblBacteria" id="AAM40189">
    <property type="protein sequence ID" value="AAM40189"/>
    <property type="gene ID" value="XCC0875"/>
</dbReference>
<dbReference type="KEGG" id="xcc:XCC0875"/>
<dbReference type="PATRIC" id="fig|190485.4.peg.950"/>
<dbReference type="eggNOG" id="COG0193">
    <property type="taxonomic scope" value="Bacteria"/>
</dbReference>
<dbReference type="HOGENOM" id="CLU_062456_3_1_6"/>
<dbReference type="OrthoDB" id="9800507at2"/>
<dbReference type="Proteomes" id="UP000001010">
    <property type="component" value="Chromosome"/>
</dbReference>
<dbReference type="GO" id="GO:0005737">
    <property type="term" value="C:cytoplasm"/>
    <property type="evidence" value="ECO:0007669"/>
    <property type="project" value="UniProtKB-SubCell"/>
</dbReference>
<dbReference type="GO" id="GO:0004045">
    <property type="term" value="F:peptidyl-tRNA hydrolase activity"/>
    <property type="evidence" value="ECO:0000318"/>
    <property type="project" value="GO_Central"/>
</dbReference>
<dbReference type="GO" id="GO:0000049">
    <property type="term" value="F:tRNA binding"/>
    <property type="evidence" value="ECO:0007669"/>
    <property type="project" value="UniProtKB-UniRule"/>
</dbReference>
<dbReference type="GO" id="GO:0006515">
    <property type="term" value="P:protein quality control for misfolded or incompletely synthesized proteins"/>
    <property type="evidence" value="ECO:0007669"/>
    <property type="project" value="UniProtKB-UniRule"/>
</dbReference>
<dbReference type="GO" id="GO:0072344">
    <property type="term" value="P:rescue of stalled ribosome"/>
    <property type="evidence" value="ECO:0007669"/>
    <property type="project" value="UniProtKB-UniRule"/>
</dbReference>
<dbReference type="CDD" id="cd00462">
    <property type="entry name" value="PTH"/>
    <property type="match status" value="1"/>
</dbReference>
<dbReference type="FunFam" id="3.40.50.1470:FF:000001">
    <property type="entry name" value="Peptidyl-tRNA hydrolase"/>
    <property type="match status" value="1"/>
</dbReference>
<dbReference type="Gene3D" id="3.40.50.1470">
    <property type="entry name" value="Peptidyl-tRNA hydrolase"/>
    <property type="match status" value="1"/>
</dbReference>
<dbReference type="HAMAP" id="MF_00083">
    <property type="entry name" value="Pept_tRNA_hydro_bact"/>
    <property type="match status" value="1"/>
</dbReference>
<dbReference type="InterPro" id="IPR001328">
    <property type="entry name" value="Pept_tRNA_hydro"/>
</dbReference>
<dbReference type="InterPro" id="IPR018171">
    <property type="entry name" value="Pept_tRNA_hydro_CS"/>
</dbReference>
<dbReference type="InterPro" id="IPR036416">
    <property type="entry name" value="Pept_tRNA_hydro_sf"/>
</dbReference>
<dbReference type="NCBIfam" id="TIGR00447">
    <property type="entry name" value="pth"/>
    <property type="match status" value="1"/>
</dbReference>
<dbReference type="PANTHER" id="PTHR17224">
    <property type="entry name" value="PEPTIDYL-TRNA HYDROLASE"/>
    <property type="match status" value="1"/>
</dbReference>
<dbReference type="PANTHER" id="PTHR17224:SF1">
    <property type="entry name" value="PEPTIDYL-TRNA HYDROLASE"/>
    <property type="match status" value="1"/>
</dbReference>
<dbReference type="Pfam" id="PF01195">
    <property type="entry name" value="Pept_tRNA_hydro"/>
    <property type="match status" value="1"/>
</dbReference>
<dbReference type="SUPFAM" id="SSF53178">
    <property type="entry name" value="Peptidyl-tRNA hydrolase-like"/>
    <property type="match status" value="1"/>
</dbReference>
<dbReference type="PROSITE" id="PS01195">
    <property type="entry name" value="PEPT_TRNA_HYDROL_1"/>
    <property type="match status" value="1"/>
</dbReference>
<name>PTH_XANCP</name>
<keyword id="KW-0963">Cytoplasm</keyword>
<keyword id="KW-0378">Hydrolase</keyword>
<keyword id="KW-1185">Reference proteome</keyword>
<keyword id="KW-0694">RNA-binding</keyword>
<keyword id="KW-0820">tRNA-binding</keyword>
<reference key="1">
    <citation type="journal article" date="2002" name="Nature">
        <title>Comparison of the genomes of two Xanthomonas pathogens with differing host specificities.</title>
        <authorList>
            <person name="da Silva A.C.R."/>
            <person name="Ferro J.A."/>
            <person name="Reinach F.C."/>
            <person name="Farah C.S."/>
            <person name="Furlan L.R."/>
            <person name="Quaggio R.B."/>
            <person name="Monteiro-Vitorello C.B."/>
            <person name="Van Sluys M.A."/>
            <person name="Almeida N.F. Jr."/>
            <person name="Alves L.M.C."/>
            <person name="do Amaral A.M."/>
            <person name="Bertolini M.C."/>
            <person name="Camargo L.E.A."/>
            <person name="Camarotte G."/>
            <person name="Cannavan F."/>
            <person name="Cardozo J."/>
            <person name="Chambergo F."/>
            <person name="Ciapina L.P."/>
            <person name="Cicarelli R.M.B."/>
            <person name="Coutinho L.L."/>
            <person name="Cursino-Santos J.R."/>
            <person name="El-Dorry H."/>
            <person name="Faria J.B."/>
            <person name="Ferreira A.J.S."/>
            <person name="Ferreira R.C.C."/>
            <person name="Ferro M.I.T."/>
            <person name="Formighieri E.F."/>
            <person name="Franco M.C."/>
            <person name="Greggio C.C."/>
            <person name="Gruber A."/>
            <person name="Katsuyama A.M."/>
            <person name="Kishi L.T."/>
            <person name="Leite R.P."/>
            <person name="Lemos E.G.M."/>
            <person name="Lemos M.V.F."/>
            <person name="Locali E.C."/>
            <person name="Machado M.A."/>
            <person name="Madeira A.M.B.N."/>
            <person name="Martinez-Rossi N.M."/>
            <person name="Martins E.C."/>
            <person name="Meidanis J."/>
            <person name="Menck C.F.M."/>
            <person name="Miyaki C.Y."/>
            <person name="Moon D.H."/>
            <person name="Moreira L.M."/>
            <person name="Novo M.T.M."/>
            <person name="Okura V.K."/>
            <person name="Oliveira M.C."/>
            <person name="Oliveira V.R."/>
            <person name="Pereira H.A."/>
            <person name="Rossi A."/>
            <person name="Sena J.A.D."/>
            <person name="Silva C."/>
            <person name="de Souza R.F."/>
            <person name="Spinola L.A.F."/>
            <person name="Takita M.A."/>
            <person name="Tamura R.E."/>
            <person name="Teixeira E.C."/>
            <person name="Tezza R.I.D."/>
            <person name="Trindade dos Santos M."/>
            <person name="Truffi D."/>
            <person name="Tsai S.M."/>
            <person name="White F.F."/>
            <person name="Setubal J.C."/>
            <person name="Kitajima J.P."/>
        </authorList>
    </citation>
    <scope>NUCLEOTIDE SEQUENCE [LARGE SCALE GENOMIC DNA]</scope>
    <source>
        <strain>ATCC 33913 / DSM 3586 / NCPPB 528 / LMG 568 / P 25</strain>
    </source>
</reference>
<proteinExistence type="inferred from homology"/>
<gene>
    <name evidence="1" type="primary">pth</name>
    <name type="ordered locus">XCC0875</name>
</gene>
<feature type="chain" id="PRO_0000187859" description="Peptidyl-tRNA hydrolase">
    <location>
        <begin position="1"/>
        <end position="193"/>
    </location>
</feature>
<feature type="active site" description="Proton acceptor" evidence="1">
    <location>
        <position position="22"/>
    </location>
</feature>
<feature type="binding site" evidence="1">
    <location>
        <position position="17"/>
    </location>
    <ligand>
        <name>tRNA</name>
        <dbReference type="ChEBI" id="CHEBI:17843"/>
    </ligand>
</feature>
<feature type="binding site" evidence="1">
    <location>
        <position position="68"/>
    </location>
    <ligand>
        <name>tRNA</name>
        <dbReference type="ChEBI" id="CHEBI:17843"/>
    </ligand>
</feature>
<feature type="binding site" evidence="1">
    <location>
        <position position="70"/>
    </location>
    <ligand>
        <name>tRNA</name>
        <dbReference type="ChEBI" id="CHEBI:17843"/>
    </ligand>
</feature>
<feature type="binding site" evidence="1">
    <location>
        <position position="116"/>
    </location>
    <ligand>
        <name>tRNA</name>
        <dbReference type="ChEBI" id="CHEBI:17843"/>
    </ligand>
</feature>
<feature type="site" description="Discriminates between blocked and unblocked aminoacyl-tRNA" evidence="1">
    <location>
        <position position="12"/>
    </location>
</feature>
<feature type="site" description="Stabilizes the basic form of H active site to accept a proton" evidence="1">
    <location>
        <position position="95"/>
    </location>
</feature>
<sequence length="193" mass="20966">MSALRLIVGLGNPGPEHAQTRHNAGFRFVDALAERTGARWGLDSKLFGETAKAEIAGHTVWLLKPATFMNLSGKSITAALRFWKIEPEQLLVAHDELDLAPGTARLKFDGGHGGQNGLRDTIRLLGHGKFHRLRVGIGHPGHKDRVVPWVLGRAGRDDDMAIGEAVDAAIDALPLALDGNFNEAMKRLHTPKK</sequence>